<keyword id="KW-0004">4Fe-4S</keyword>
<keyword id="KW-0028">Amino-acid biosynthesis</keyword>
<keyword id="KW-0198">Cysteine biosynthesis</keyword>
<keyword id="KW-0349">Heme</keyword>
<keyword id="KW-0408">Iron</keyword>
<keyword id="KW-0411">Iron-sulfur</keyword>
<keyword id="KW-0479">Metal-binding</keyword>
<keyword id="KW-0521">NADP</keyword>
<keyword id="KW-0560">Oxidoreductase</keyword>
<keyword id="KW-1185">Reference proteome</keyword>
<reference key="1">
    <citation type="journal article" date="2009" name="Appl. Environ. Microbiol.">
        <title>Genome analysis of the meat starter culture bacterium Staphylococcus carnosus TM300.</title>
        <authorList>
            <person name="Rosenstein R."/>
            <person name="Nerz C."/>
            <person name="Biswas L."/>
            <person name="Resch A."/>
            <person name="Raddatz G."/>
            <person name="Schuster S.C."/>
            <person name="Goetz F."/>
        </authorList>
    </citation>
    <scope>NUCLEOTIDE SEQUENCE [LARGE SCALE GENOMIC DNA]</scope>
    <source>
        <strain>TM300</strain>
    </source>
</reference>
<name>CYSI_STACT</name>
<accession>B9DLM4</accession>
<sequence>MAKNDNELYKGLDDLERNKGESNYLRGTIVEGLNDPITGAIAEDDTKLLKFHGSYMQDDRDLRQERRKQKLEPLYAFMIRVRIPGGKVSTDQWLKLDALADNYAGEQIRLTTRQTMQYHGILKRNLKKSMQSIHDAVLDSIAACGDVTRNVMCNPNPYQSDIYAEVNRAADSISEHLLPKTTAYHEIWLDGEKVVDTKKEDHEPMYGKTYLPRKFKIGIAVPPSNDIDVYSQDIGLIGIVENDELIGYNVSVGGGMGMKHDDLRTYPQVGKVIGFIPKDKAEEVCEKILTIQRDYGDRSDRMQARFKYTVDRKGLDWIKQELNDRLGWELEEAKSFEFEDNGDRLGWTEGSGKHHYTLFIQNGRIKDTEDFKLKTAIKELAKVHKGDFRMTPNQNLIIANVDEKDKPEIQKIIDNYGLTDGKNYSGLRRNSMACVAFPTCGLAMAESERYLPSLVGKIEDLLDEFGLSEEEITIRMTGCPNGCARPALAEISFIGKAPGKYNFYLGGSFKGDRLNKLYKENIGEKEILESLRPILEQYSKEREKGEHFGDFVVRKGIVEKVTDGRDFRG</sequence>
<gene>
    <name evidence="1" type="primary">cysI</name>
    <name type="ordered locus">Sca_0060</name>
</gene>
<organism>
    <name type="scientific">Staphylococcus carnosus (strain TM300)</name>
    <dbReference type="NCBI Taxonomy" id="396513"/>
    <lineage>
        <taxon>Bacteria</taxon>
        <taxon>Bacillati</taxon>
        <taxon>Bacillota</taxon>
        <taxon>Bacilli</taxon>
        <taxon>Bacillales</taxon>
        <taxon>Staphylococcaceae</taxon>
        <taxon>Staphylococcus</taxon>
    </lineage>
</organism>
<evidence type="ECO:0000255" key="1">
    <source>
        <dbReference type="HAMAP-Rule" id="MF_01540"/>
    </source>
</evidence>
<comment type="function">
    <text evidence="1">Component of the sulfite reductase complex that catalyzes the 6-electron reduction of sulfite to sulfide. This is one of several activities required for the biosynthesis of L-cysteine from sulfate.</text>
</comment>
<comment type="catalytic activity">
    <reaction evidence="1">
        <text>hydrogen sulfide + 3 NADP(+) + 3 H2O = sulfite + 3 NADPH + 4 H(+)</text>
        <dbReference type="Rhea" id="RHEA:13801"/>
        <dbReference type="ChEBI" id="CHEBI:15377"/>
        <dbReference type="ChEBI" id="CHEBI:15378"/>
        <dbReference type="ChEBI" id="CHEBI:17359"/>
        <dbReference type="ChEBI" id="CHEBI:29919"/>
        <dbReference type="ChEBI" id="CHEBI:57783"/>
        <dbReference type="ChEBI" id="CHEBI:58349"/>
        <dbReference type="EC" id="1.8.1.2"/>
    </reaction>
</comment>
<comment type="cofactor">
    <cofactor evidence="1">
        <name>siroheme</name>
        <dbReference type="ChEBI" id="CHEBI:60052"/>
    </cofactor>
    <text evidence="1">Binds 1 siroheme per subunit.</text>
</comment>
<comment type="cofactor">
    <cofactor evidence="1">
        <name>[4Fe-4S] cluster</name>
        <dbReference type="ChEBI" id="CHEBI:49883"/>
    </cofactor>
    <text evidence="1">Binds 1 [4Fe-4S] cluster per subunit.</text>
</comment>
<comment type="pathway">
    <text evidence="1">Sulfur metabolism; hydrogen sulfide biosynthesis; hydrogen sulfide from sulfite (NADPH route): step 1/1.</text>
</comment>
<comment type="subunit">
    <text evidence="1">Alpha(8)-beta(8). The alpha component is a flavoprotein, the beta component is a hemoprotein.</text>
</comment>
<comment type="similarity">
    <text evidence="1">Belongs to the nitrite and sulfite reductase 4Fe-4S domain family.</text>
</comment>
<dbReference type="EC" id="1.8.1.2" evidence="1"/>
<dbReference type="EMBL" id="AM295250">
    <property type="protein sequence ID" value="CAL26974.1"/>
    <property type="molecule type" value="Genomic_DNA"/>
</dbReference>
<dbReference type="RefSeq" id="WP_012664089.1">
    <property type="nucleotide sequence ID" value="NC_012121.1"/>
</dbReference>
<dbReference type="SMR" id="B9DLM4"/>
<dbReference type="GeneID" id="93794972"/>
<dbReference type="KEGG" id="sca:SCA_0060"/>
<dbReference type="eggNOG" id="COG0155">
    <property type="taxonomic scope" value="Bacteria"/>
</dbReference>
<dbReference type="HOGENOM" id="CLU_001975_3_2_9"/>
<dbReference type="OrthoDB" id="9803707at2"/>
<dbReference type="BioCyc" id="SCAR396513:SCA_RS00285-MONOMER"/>
<dbReference type="UniPathway" id="UPA00140">
    <property type="reaction ID" value="UER00207"/>
</dbReference>
<dbReference type="Proteomes" id="UP000000444">
    <property type="component" value="Chromosome"/>
</dbReference>
<dbReference type="GO" id="GO:0009337">
    <property type="term" value="C:sulfite reductase complex (NADPH)"/>
    <property type="evidence" value="ECO:0007669"/>
    <property type="project" value="InterPro"/>
</dbReference>
<dbReference type="GO" id="GO:0051539">
    <property type="term" value="F:4 iron, 4 sulfur cluster binding"/>
    <property type="evidence" value="ECO:0007669"/>
    <property type="project" value="UniProtKB-KW"/>
</dbReference>
<dbReference type="GO" id="GO:0020037">
    <property type="term" value="F:heme binding"/>
    <property type="evidence" value="ECO:0007669"/>
    <property type="project" value="InterPro"/>
</dbReference>
<dbReference type="GO" id="GO:0046872">
    <property type="term" value="F:metal ion binding"/>
    <property type="evidence" value="ECO:0007669"/>
    <property type="project" value="UniProtKB-KW"/>
</dbReference>
<dbReference type="GO" id="GO:0050661">
    <property type="term" value="F:NADP binding"/>
    <property type="evidence" value="ECO:0007669"/>
    <property type="project" value="InterPro"/>
</dbReference>
<dbReference type="GO" id="GO:0050311">
    <property type="term" value="F:sulfite reductase (ferredoxin) activity"/>
    <property type="evidence" value="ECO:0007669"/>
    <property type="project" value="TreeGrafter"/>
</dbReference>
<dbReference type="GO" id="GO:0004783">
    <property type="term" value="F:sulfite reductase (NADPH) activity"/>
    <property type="evidence" value="ECO:0007669"/>
    <property type="project" value="UniProtKB-UniRule"/>
</dbReference>
<dbReference type="GO" id="GO:0019344">
    <property type="term" value="P:cysteine biosynthetic process"/>
    <property type="evidence" value="ECO:0007669"/>
    <property type="project" value="UniProtKB-KW"/>
</dbReference>
<dbReference type="GO" id="GO:0070814">
    <property type="term" value="P:hydrogen sulfide biosynthetic process"/>
    <property type="evidence" value="ECO:0007669"/>
    <property type="project" value="UniProtKB-UniRule"/>
</dbReference>
<dbReference type="GO" id="GO:0000103">
    <property type="term" value="P:sulfate assimilation"/>
    <property type="evidence" value="ECO:0007669"/>
    <property type="project" value="UniProtKB-UniRule"/>
</dbReference>
<dbReference type="FunFam" id="3.30.413.10:FF:000003">
    <property type="entry name" value="Sulfite reductase [NADPH] hemoprotein beta-component"/>
    <property type="match status" value="1"/>
</dbReference>
<dbReference type="FunFam" id="3.30.413.10:FF:000004">
    <property type="entry name" value="Sulfite reductase [NADPH] hemoprotein beta-component"/>
    <property type="match status" value="1"/>
</dbReference>
<dbReference type="Gene3D" id="3.30.413.10">
    <property type="entry name" value="Sulfite Reductase Hemoprotein, domain 1"/>
    <property type="match status" value="2"/>
</dbReference>
<dbReference type="HAMAP" id="MF_01540">
    <property type="entry name" value="CysI"/>
    <property type="match status" value="1"/>
</dbReference>
<dbReference type="InterPro" id="IPR011786">
    <property type="entry name" value="CysI"/>
</dbReference>
<dbReference type="InterPro" id="IPR005117">
    <property type="entry name" value="NiRdtase/SiRdtase_haem-b_fer"/>
</dbReference>
<dbReference type="InterPro" id="IPR036136">
    <property type="entry name" value="Nit/Sulf_reduc_fer-like_dom_sf"/>
</dbReference>
<dbReference type="InterPro" id="IPR006067">
    <property type="entry name" value="NO2/SO3_Rdtase_4Fe4S_dom"/>
</dbReference>
<dbReference type="InterPro" id="IPR045169">
    <property type="entry name" value="NO2/SO3_Rdtase_4Fe4S_prot"/>
</dbReference>
<dbReference type="InterPro" id="IPR045854">
    <property type="entry name" value="NO2/SO3_Rdtase_4Fe4S_sf"/>
</dbReference>
<dbReference type="InterPro" id="IPR006066">
    <property type="entry name" value="NO2/SO3_Rdtase_FeS/sirohaem_BS"/>
</dbReference>
<dbReference type="NCBIfam" id="TIGR02041">
    <property type="entry name" value="CysI"/>
    <property type="match status" value="1"/>
</dbReference>
<dbReference type="NCBIfam" id="NF010029">
    <property type="entry name" value="PRK13504.1"/>
    <property type="match status" value="1"/>
</dbReference>
<dbReference type="PANTHER" id="PTHR11493:SF47">
    <property type="entry name" value="SULFITE REDUCTASE [NADPH] SUBUNIT BETA"/>
    <property type="match status" value="1"/>
</dbReference>
<dbReference type="PANTHER" id="PTHR11493">
    <property type="entry name" value="SULFITE REDUCTASE [NADPH] SUBUNIT BETA-RELATED"/>
    <property type="match status" value="1"/>
</dbReference>
<dbReference type="Pfam" id="PF01077">
    <property type="entry name" value="NIR_SIR"/>
    <property type="match status" value="2"/>
</dbReference>
<dbReference type="Pfam" id="PF03460">
    <property type="entry name" value="NIR_SIR_ferr"/>
    <property type="match status" value="2"/>
</dbReference>
<dbReference type="PRINTS" id="PR00397">
    <property type="entry name" value="SIROHAEM"/>
</dbReference>
<dbReference type="SUPFAM" id="SSF56014">
    <property type="entry name" value="Nitrite and sulphite reductase 4Fe-4S domain-like"/>
    <property type="match status" value="2"/>
</dbReference>
<dbReference type="SUPFAM" id="SSF55124">
    <property type="entry name" value="Nitrite/Sulfite reductase N-terminal domain-like"/>
    <property type="match status" value="2"/>
</dbReference>
<feature type="chain" id="PRO_0000388520" description="Sulfite reductase [NADPH] hemoprotein beta-component">
    <location>
        <begin position="1"/>
        <end position="569"/>
    </location>
</feature>
<feature type="binding site" evidence="1">
    <location>
        <position position="434"/>
    </location>
    <ligand>
        <name>[4Fe-4S] cluster</name>
        <dbReference type="ChEBI" id="CHEBI:49883"/>
    </ligand>
</feature>
<feature type="binding site" evidence="1">
    <location>
        <position position="440"/>
    </location>
    <ligand>
        <name>[4Fe-4S] cluster</name>
        <dbReference type="ChEBI" id="CHEBI:49883"/>
    </ligand>
</feature>
<feature type="binding site" evidence="1">
    <location>
        <position position="479"/>
    </location>
    <ligand>
        <name>[4Fe-4S] cluster</name>
        <dbReference type="ChEBI" id="CHEBI:49883"/>
    </ligand>
</feature>
<feature type="binding site" evidence="1">
    <location>
        <position position="483"/>
    </location>
    <ligand>
        <name>[4Fe-4S] cluster</name>
        <dbReference type="ChEBI" id="CHEBI:49883"/>
    </ligand>
</feature>
<feature type="binding site" description="axial binding residue" evidence="1">
    <location>
        <position position="483"/>
    </location>
    <ligand>
        <name>siroheme</name>
        <dbReference type="ChEBI" id="CHEBI:60052"/>
    </ligand>
    <ligandPart>
        <name>Fe</name>
        <dbReference type="ChEBI" id="CHEBI:18248"/>
    </ligandPart>
</feature>
<proteinExistence type="inferred from homology"/>
<protein>
    <recommendedName>
        <fullName evidence="1">Sulfite reductase [NADPH] hemoprotein beta-component</fullName>
        <shortName evidence="1">SiR-HP</shortName>
        <shortName evidence="1">SiRHP</shortName>
        <ecNumber evidence="1">1.8.1.2</ecNumber>
    </recommendedName>
</protein>